<proteinExistence type="inferred from homology"/>
<reference key="1">
    <citation type="submission" date="2001-07" db="EMBL/GenBank/DDBJ databases">
        <title>The Candida albicans HSP78 gene encoding a member of the ClpB family of stress proteins.</title>
        <authorList>
            <person name="Bhattacherjee V."/>
            <person name="Hostetter M."/>
        </authorList>
    </citation>
    <scope>NUCLEOTIDE SEQUENCE [GENOMIC DNA]</scope>
    <source>
        <strain>SC5314 / ATCC MYA-2876</strain>
    </source>
</reference>
<reference key="2">
    <citation type="journal article" date="2004" name="Proc. Natl. Acad. Sci. U.S.A.">
        <title>The diploid genome sequence of Candida albicans.</title>
        <authorList>
            <person name="Jones T."/>
            <person name="Federspiel N.A."/>
            <person name="Chibana H."/>
            <person name="Dungan J."/>
            <person name="Kalman S."/>
            <person name="Magee B.B."/>
            <person name="Newport G."/>
            <person name="Thorstenson Y.R."/>
            <person name="Agabian N."/>
            <person name="Magee P.T."/>
            <person name="Davis R.W."/>
            <person name="Scherer S."/>
        </authorList>
    </citation>
    <scope>NUCLEOTIDE SEQUENCE [LARGE SCALE GENOMIC DNA]</scope>
    <source>
        <strain>SC5314 / ATCC MYA-2876</strain>
    </source>
</reference>
<reference key="3">
    <citation type="journal article" date="2007" name="Genome Biol.">
        <title>Assembly of the Candida albicans genome into sixteen supercontigs aligned on the eight chromosomes.</title>
        <authorList>
            <person name="van het Hoog M."/>
            <person name="Rast T.J."/>
            <person name="Martchenko M."/>
            <person name="Grindle S."/>
            <person name="Dignard D."/>
            <person name="Hogues H."/>
            <person name="Cuomo C."/>
            <person name="Berriman M."/>
            <person name="Scherer S."/>
            <person name="Magee B.B."/>
            <person name="Whiteway M."/>
            <person name="Chibana H."/>
            <person name="Nantel A."/>
            <person name="Magee P.T."/>
        </authorList>
    </citation>
    <scope>GENOME REANNOTATION</scope>
    <source>
        <strain>SC5314 / ATCC MYA-2876</strain>
    </source>
</reference>
<reference key="4">
    <citation type="journal article" date="2013" name="Genome Biol.">
        <title>Assembly of a phased diploid Candida albicans genome facilitates allele-specific measurements and provides a simple model for repeat and indel structure.</title>
        <authorList>
            <person name="Muzzey D."/>
            <person name="Schwartz K."/>
            <person name="Weissman J.S."/>
            <person name="Sherlock G."/>
        </authorList>
    </citation>
    <scope>NUCLEOTIDE SEQUENCE [LARGE SCALE GENOMIC DNA]</scope>
    <scope>GENOME REANNOTATION</scope>
    <source>
        <strain>SC5314 / ATCC MYA-2876</strain>
    </source>
</reference>
<name>HSP78_CANAL</name>
<accession>Q96UX5</accession>
<accession>A0A1D8PGX8</accession>
<accession>Q5AHB4</accession>
<sequence>MLSSRIPKGKLLKQTSATSYLNLAKSMPITTARYRPNQYYANELAKLNVFTIHNIPSPCFSQVRNFHSSFPRKLQMQQTEQGDNRPALEKFGSDLTQLAKEGKLDPVIGRDHEIRRTIQILSRRTKNNPVLIGNAGTGKTAVMEGLAQRIIRGEVPDSMKDKQIITLDLAGIISGAKYRGDFESKLKSILKEVEEKNGKVILFIDEFHLLMGLGKAEGSIDASNLLKPALARGKLSMCGATTIEEYRKYVEKDAALARRFSPVTVNEPTVEDTISILRGLKERYEVHHGVRIMDSALVTAALYSNRYITDRFLPDKAIDLVDEASSTLRLQHESRPDAIATLDRQIMTIEIELESLRKEEDQLSIDRKHKLEKELEVKKSELKELTDQWESEKRAIDAVKNAKSELEKAKYELEQATREGDYARASRIQYASIPELQDKIQELSKNELAAKSSNLLHDSVTSEDIAGVISKMTGIPVNNLLKGEKDKLLDMNILLRQSVVGQDEAIDAVSDAVRLQRAGLTSENRPIASFMFLGPTGTGKTEGGKSLAQFLFNDKNAVVRFDMSEFQEKHTISRLIGSPPGYVGYEESGELTEAVRRKPYSVVLFDEFEKAHPDLSKLLLQVLDEGSLTDSHGKKIDFKNTIIVMTSNIGQEILLADKNTYEDGHINSEVKSQVLENLRHHYAPEFLNRIDDIVVFNRLSKTALKEILDIRLREIGDRLVDKRIILQLTDEAKTLLCDMGYDPTYGARPLNRVLRKKLLDPLAMRLIKGQVQENETVKVEVKDHKIYVVPNHSEGTVIEKEEDYFKEDKDDN</sequence>
<feature type="transit peptide" description="Mitochondrion" evidence="2">
    <location>
        <begin position="1"/>
        <end position="73"/>
    </location>
</feature>
<feature type="chain" id="PRO_0000005499" description="Heat shock protein 78, mitochondrial">
    <location>
        <begin position="74"/>
        <end position="812"/>
    </location>
</feature>
<feature type="region of interest" description="NBD1" evidence="1">
    <location>
        <begin position="88"/>
        <end position="336"/>
    </location>
</feature>
<feature type="region of interest" description="NBD2" evidence="1">
    <location>
        <begin position="460"/>
        <end position="651"/>
    </location>
</feature>
<feature type="coiled-coil region" evidence="2">
    <location>
        <begin position="337"/>
        <end position="425"/>
    </location>
</feature>
<feature type="binding site" evidence="2">
    <location>
        <begin position="133"/>
        <end position="140"/>
    </location>
    <ligand>
        <name>ATP</name>
        <dbReference type="ChEBI" id="CHEBI:30616"/>
        <label>1</label>
    </ligand>
</feature>
<feature type="binding site" evidence="2">
    <location>
        <begin position="534"/>
        <end position="541"/>
    </location>
    <ligand>
        <name>ATP</name>
        <dbReference type="ChEBI" id="CHEBI:30616"/>
        <label>2</label>
    </ligand>
</feature>
<feature type="sequence conflict" description="In Ref. 1; AAK97626." evidence="3" ref="1">
    <original>M</original>
    <variation>I</variation>
    <location>
        <position position="27"/>
    </location>
</feature>
<feature type="sequence conflict" description="In Ref. 1; AAK97626." evidence="3" ref="1">
    <original>L</original>
    <variation>P</variation>
    <location>
        <position position="47"/>
    </location>
</feature>
<feature type="sequence conflict" description="In Ref. 1; AAK97626." evidence="3" ref="1">
    <original>V</original>
    <variation>G</variation>
    <location>
        <position position="270"/>
    </location>
</feature>
<feature type="sequence conflict" description="In Ref. 1; AAK97626." evidence="3" ref="1">
    <original>GG</original>
    <variation>LT</variation>
    <location>
        <begin position="543"/>
        <end position="544"/>
    </location>
</feature>
<evidence type="ECO:0000250" key="1"/>
<evidence type="ECO:0000255" key="2"/>
<evidence type="ECO:0000305" key="3"/>
<protein>
    <recommendedName>
        <fullName>Heat shock protein 78, mitochondrial</fullName>
    </recommendedName>
</protein>
<keyword id="KW-0067">ATP-binding</keyword>
<keyword id="KW-0143">Chaperone</keyword>
<keyword id="KW-0175">Coiled coil</keyword>
<keyword id="KW-0496">Mitochondrion</keyword>
<keyword id="KW-0547">Nucleotide-binding</keyword>
<keyword id="KW-1185">Reference proteome</keyword>
<keyword id="KW-0677">Repeat</keyword>
<keyword id="KW-0346">Stress response</keyword>
<keyword id="KW-0809">Transit peptide</keyword>
<comment type="function">
    <text evidence="1">Required, in concert with mitochondrial Hsp70, for the dissociation, resolubilization and refolding of aggregates of damaged proteins in the mitochondrial matrix after heat stress. May extract proteins from aggregates by unfolding and threading them in an ATP-dependent process through the axial channel of the protein hexamer, after which they can be refolded by the Hsp70 chaperone system. Required for resumption of mitochondrial respiratory function, DNA synthesis and morphology after heat stress (By similarity).</text>
</comment>
<comment type="subunit">
    <text evidence="1">Homohexamer, forming a ring with a central pore.</text>
</comment>
<comment type="subcellular location">
    <subcellularLocation>
        <location>Mitochondrion matrix</location>
    </subcellularLocation>
</comment>
<comment type="domain">
    <text evidence="1">Has 2 AAA ATPase type nucleotide-binding domains (NBDs) per monomer. NBD1 is primarily responsible for ATP hydrolysis. NBD2 is crucial for oligomerization (By similarity).</text>
</comment>
<comment type="similarity">
    <text evidence="3">Belongs to the ClpA/ClpB family.</text>
</comment>
<dbReference type="EMBL" id="AF399713">
    <property type="protein sequence ID" value="AAK97626.1"/>
    <property type="molecule type" value="Genomic_DNA"/>
</dbReference>
<dbReference type="EMBL" id="CP017624">
    <property type="protein sequence ID" value="AOW27375.1"/>
    <property type="molecule type" value="Genomic_DNA"/>
</dbReference>
<dbReference type="RefSeq" id="XP_721005.2">
    <property type="nucleotide sequence ID" value="XM_715912.2"/>
</dbReference>
<dbReference type="SMR" id="Q96UX5"/>
<dbReference type="BioGRID" id="1220336">
    <property type="interactions" value="1"/>
</dbReference>
<dbReference type="FunCoup" id="Q96UX5">
    <property type="interactions" value="231"/>
</dbReference>
<dbReference type="STRING" id="237561.Q96UX5"/>
<dbReference type="EnsemblFungi" id="C2_03390C_A-T">
    <property type="protein sequence ID" value="C2_03390C_A-T-p1"/>
    <property type="gene ID" value="C2_03390C_A"/>
</dbReference>
<dbReference type="GeneID" id="3637414"/>
<dbReference type="KEGG" id="cal:CAALFM_C203390CA"/>
<dbReference type="CGD" id="CAL0000189244">
    <property type="gene designation" value="HSP78"/>
</dbReference>
<dbReference type="VEuPathDB" id="FungiDB:C2_03390C_A"/>
<dbReference type="eggNOG" id="KOG1051">
    <property type="taxonomic scope" value="Eukaryota"/>
</dbReference>
<dbReference type="HOGENOM" id="CLU_005070_5_0_1"/>
<dbReference type="InParanoid" id="Q96UX5"/>
<dbReference type="OrthoDB" id="47330at2759"/>
<dbReference type="PRO" id="PR:Q96UX5"/>
<dbReference type="Proteomes" id="UP000000559">
    <property type="component" value="Chromosome 2"/>
</dbReference>
<dbReference type="GO" id="GO:0005737">
    <property type="term" value="C:cytoplasm"/>
    <property type="evidence" value="ECO:0000318"/>
    <property type="project" value="GO_Central"/>
</dbReference>
<dbReference type="GO" id="GO:0005759">
    <property type="term" value="C:mitochondrial matrix"/>
    <property type="evidence" value="ECO:0000318"/>
    <property type="project" value="GO_Central"/>
</dbReference>
<dbReference type="GO" id="GO:0005524">
    <property type="term" value="F:ATP binding"/>
    <property type="evidence" value="ECO:0007669"/>
    <property type="project" value="UniProtKB-KW"/>
</dbReference>
<dbReference type="GO" id="GO:0016887">
    <property type="term" value="F:ATP hydrolysis activity"/>
    <property type="evidence" value="ECO:0000318"/>
    <property type="project" value="GO_Central"/>
</dbReference>
<dbReference type="GO" id="GO:0051787">
    <property type="term" value="F:misfolded protein binding"/>
    <property type="evidence" value="ECO:0007669"/>
    <property type="project" value="EnsemblFungi"/>
</dbReference>
<dbReference type="GO" id="GO:0034605">
    <property type="term" value="P:cellular response to heat"/>
    <property type="evidence" value="ECO:0000318"/>
    <property type="project" value="GO_Central"/>
</dbReference>
<dbReference type="GO" id="GO:0000002">
    <property type="term" value="P:mitochondrial genome maintenance"/>
    <property type="evidence" value="ECO:0007669"/>
    <property type="project" value="EnsemblFungi"/>
</dbReference>
<dbReference type="GO" id="GO:0042026">
    <property type="term" value="P:protein refolding"/>
    <property type="evidence" value="ECO:0000318"/>
    <property type="project" value="GO_Central"/>
</dbReference>
<dbReference type="GO" id="GO:0050821">
    <property type="term" value="P:protein stabilization"/>
    <property type="evidence" value="ECO:0007669"/>
    <property type="project" value="EnsemblFungi"/>
</dbReference>
<dbReference type="GO" id="GO:0043335">
    <property type="term" value="P:protein unfolding"/>
    <property type="evidence" value="ECO:0000318"/>
    <property type="project" value="GO_Central"/>
</dbReference>
<dbReference type="CDD" id="cd00009">
    <property type="entry name" value="AAA"/>
    <property type="match status" value="1"/>
</dbReference>
<dbReference type="CDD" id="cd19499">
    <property type="entry name" value="RecA-like_ClpB_Hsp104-like"/>
    <property type="match status" value="1"/>
</dbReference>
<dbReference type="FunFam" id="1.10.8.60:FF:000017">
    <property type="entry name" value="ATP-dependent chaperone ClpB"/>
    <property type="match status" value="1"/>
</dbReference>
<dbReference type="FunFam" id="3.40.50.300:FF:000120">
    <property type="entry name" value="ATP-dependent chaperone ClpB"/>
    <property type="match status" value="1"/>
</dbReference>
<dbReference type="FunFam" id="3.40.50.300:FF:000025">
    <property type="entry name" value="ATP-dependent Clp protease subunit"/>
    <property type="match status" value="1"/>
</dbReference>
<dbReference type="FunFam" id="3.40.50.300:FF:000010">
    <property type="entry name" value="Chaperone clpB 1, putative"/>
    <property type="match status" value="1"/>
</dbReference>
<dbReference type="Gene3D" id="1.10.8.60">
    <property type="match status" value="1"/>
</dbReference>
<dbReference type="Gene3D" id="3.40.50.300">
    <property type="entry name" value="P-loop containing nucleotide triphosphate hydrolases"/>
    <property type="match status" value="3"/>
</dbReference>
<dbReference type="InterPro" id="IPR003593">
    <property type="entry name" value="AAA+_ATPase"/>
</dbReference>
<dbReference type="InterPro" id="IPR003959">
    <property type="entry name" value="ATPase_AAA_core"/>
</dbReference>
<dbReference type="InterPro" id="IPR019489">
    <property type="entry name" value="Clp_ATPase_C"/>
</dbReference>
<dbReference type="InterPro" id="IPR001270">
    <property type="entry name" value="ClpA/B"/>
</dbReference>
<dbReference type="InterPro" id="IPR018368">
    <property type="entry name" value="ClpA/B_CS1"/>
</dbReference>
<dbReference type="InterPro" id="IPR028299">
    <property type="entry name" value="ClpA/B_CS2"/>
</dbReference>
<dbReference type="InterPro" id="IPR041546">
    <property type="entry name" value="ClpA/ClpB_AAA_lid"/>
</dbReference>
<dbReference type="InterPro" id="IPR050130">
    <property type="entry name" value="ClpA_ClpB"/>
</dbReference>
<dbReference type="InterPro" id="IPR027417">
    <property type="entry name" value="P-loop_NTPase"/>
</dbReference>
<dbReference type="PANTHER" id="PTHR11638">
    <property type="entry name" value="ATP-DEPENDENT CLP PROTEASE"/>
    <property type="match status" value="1"/>
</dbReference>
<dbReference type="PANTHER" id="PTHR11638:SF176">
    <property type="entry name" value="HEAT SHOCK PROTEIN 78, MITOCHONDRIAL"/>
    <property type="match status" value="1"/>
</dbReference>
<dbReference type="Pfam" id="PF00004">
    <property type="entry name" value="AAA"/>
    <property type="match status" value="1"/>
</dbReference>
<dbReference type="Pfam" id="PF07724">
    <property type="entry name" value="AAA_2"/>
    <property type="match status" value="1"/>
</dbReference>
<dbReference type="Pfam" id="PF17871">
    <property type="entry name" value="AAA_lid_9"/>
    <property type="match status" value="1"/>
</dbReference>
<dbReference type="Pfam" id="PF10431">
    <property type="entry name" value="ClpB_D2-small"/>
    <property type="match status" value="1"/>
</dbReference>
<dbReference type="PRINTS" id="PR00300">
    <property type="entry name" value="CLPPROTEASEA"/>
</dbReference>
<dbReference type="SMART" id="SM00382">
    <property type="entry name" value="AAA"/>
    <property type="match status" value="2"/>
</dbReference>
<dbReference type="SMART" id="SM01086">
    <property type="entry name" value="ClpB_D2-small"/>
    <property type="match status" value="1"/>
</dbReference>
<dbReference type="SUPFAM" id="SSF52540">
    <property type="entry name" value="P-loop containing nucleoside triphosphate hydrolases"/>
    <property type="match status" value="2"/>
</dbReference>
<dbReference type="PROSITE" id="PS00870">
    <property type="entry name" value="CLPAB_1"/>
    <property type="match status" value="1"/>
</dbReference>
<dbReference type="PROSITE" id="PS00871">
    <property type="entry name" value="CLPAB_2"/>
    <property type="match status" value="1"/>
</dbReference>
<gene>
    <name type="primary">HSP78</name>
    <name type="ordered locus">CAALFM_C203390CA</name>
    <name type="ORF">CaO19.8501</name>
    <name type="ORF">CaO19.882</name>
</gene>
<organism>
    <name type="scientific">Candida albicans (strain SC5314 / ATCC MYA-2876)</name>
    <name type="common">Yeast</name>
    <dbReference type="NCBI Taxonomy" id="237561"/>
    <lineage>
        <taxon>Eukaryota</taxon>
        <taxon>Fungi</taxon>
        <taxon>Dikarya</taxon>
        <taxon>Ascomycota</taxon>
        <taxon>Saccharomycotina</taxon>
        <taxon>Pichiomycetes</taxon>
        <taxon>Debaryomycetaceae</taxon>
        <taxon>Candida/Lodderomyces clade</taxon>
        <taxon>Candida</taxon>
    </lineage>
</organism>